<organism>
    <name type="scientific">Xenopus laevis</name>
    <name type="common">African clawed frog</name>
    <dbReference type="NCBI Taxonomy" id="8355"/>
    <lineage>
        <taxon>Eukaryota</taxon>
        <taxon>Metazoa</taxon>
        <taxon>Chordata</taxon>
        <taxon>Craniata</taxon>
        <taxon>Vertebrata</taxon>
        <taxon>Euteleostomi</taxon>
        <taxon>Amphibia</taxon>
        <taxon>Batrachia</taxon>
        <taxon>Anura</taxon>
        <taxon>Pipoidea</taxon>
        <taxon>Pipidae</taxon>
        <taxon>Xenopodinae</taxon>
        <taxon>Xenopus</taxon>
        <taxon>Xenopus</taxon>
    </lineage>
</organism>
<feature type="signal peptide" evidence="1">
    <location>
        <begin position="1"/>
        <end position="25"/>
    </location>
</feature>
<feature type="chain" id="PRO_0000033010" description="Somatotropin-B">
    <location>
        <begin position="26"/>
        <end position="208"/>
    </location>
</feature>
<feature type="binding site" evidence="1">
    <location>
        <position position="44"/>
    </location>
    <ligand>
        <name>Zn(2+)</name>
        <dbReference type="ChEBI" id="CHEBI:29105"/>
    </ligand>
</feature>
<feature type="binding site" evidence="1">
    <location>
        <position position="190"/>
    </location>
    <ligand>
        <name>Zn(2+)</name>
        <dbReference type="ChEBI" id="CHEBI:29105"/>
    </ligand>
</feature>
<feature type="disulfide bond" evidence="1">
    <location>
        <begin position="77"/>
        <end position="181"/>
    </location>
</feature>
<feature type="disulfide bond" evidence="1">
    <location>
        <begin position="198"/>
        <end position="206"/>
    </location>
</feature>
<feature type="sequence conflict" description="In Ref. 2; CAA32747." evidence="2" ref="2">
    <original>N</original>
    <variation>S</variation>
    <location>
        <position position="148"/>
    </location>
</feature>
<proteinExistence type="evidence at transcript level"/>
<dbReference type="EMBL" id="AF193798">
    <property type="protein sequence ID" value="AAF05774.1"/>
    <property type="molecule type" value="mRNA"/>
</dbReference>
<dbReference type="EMBL" id="X14602">
    <property type="protein sequence ID" value="CAA32747.1"/>
    <property type="molecule type" value="mRNA"/>
</dbReference>
<dbReference type="PIR" id="S04354">
    <property type="entry name" value="S04354"/>
</dbReference>
<dbReference type="SMR" id="P12856"/>
<dbReference type="GeneID" id="373617"/>
<dbReference type="KEGG" id="xla:373617"/>
<dbReference type="AGR" id="Xenbase:XB-GENE-5872068"/>
<dbReference type="CTD" id="373617"/>
<dbReference type="Xenbase" id="XB-GENE-5872068">
    <property type="gene designation" value="gh2.S"/>
</dbReference>
<dbReference type="OrthoDB" id="9925773at2759"/>
<dbReference type="Proteomes" id="UP000186698">
    <property type="component" value="Chromosome 4S"/>
</dbReference>
<dbReference type="Bgee" id="373617">
    <property type="expression patterns" value="Expressed in brain and 1 other cell type or tissue"/>
</dbReference>
<dbReference type="GO" id="GO:0005615">
    <property type="term" value="C:extracellular space"/>
    <property type="evidence" value="ECO:0000318"/>
    <property type="project" value="GO_Central"/>
</dbReference>
<dbReference type="GO" id="GO:0008083">
    <property type="term" value="F:growth factor activity"/>
    <property type="evidence" value="ECO:0000318"/>
    <property type="project" value="GO_Central"/>
</dbReference>
<dbReference type="GO" id="GO:0005131">
    <property type="term" value="F:growth hormone receptor binding"/>
    <property type="evidence" value="ECO:0000318"/>
    <property type="project" value="GO_Central"/>
</dbReference>
<dbReference type="GO" id="GO:0005179">
    <property type="term" value="F:hormone activity"/>
    <property type="evidence" value="ECO:0000318"/>
    <property type="project" value="GO_Central"/>
</dbReference>
<dbReference type="GO" id="GO:0046872">
    <property type="term" value="F:metal ion binding"/>
    <property type="evidence" value="ECO:0007669"/>
    <property type="project" value="UniProtKB-KW"/>
</dbReference>
<dbReference type="GO" id="GO:0048513">
    <property type="term" value="P:animal organ development"/>
    <property type="evidence" value="ECO:0000318"/>
    <property type="project" value="GO_Central"/>
</dbReference>
<dbReference type="GO" id="GO:0060396">
    <property type="term" value="P:growth hormone receptor signaling pathway"/>
    <property type="evidence" value="ECO:0000318"/>
    <property type="project" value="GO_Central"/>
</dbReference>
<dbReference type="GO" id="GO:0045927">
    <property type="term" value="P:positive regulation of growth"/>
    <property type="evidence" value="ECO:0007669"/>
    <property type="project" value="TreeGrafter"/>
</dbReference>
<dbReference type="GO" id="GO:0046427">
    <property type="term" value="P:positive regulation of receptor signaling pathway via JAK-STAT"/>
    <property type="evidence" value="ECO:0000318"/>
    <property type="project" value="GO_Central"/>
</dbReference>
<dbReference type="GO" id="GO:0031667">
    <property type="term" value="P:response to nutrient levels"/>
    <property type="evidence" value="ECO:0000318"/>
    <property type="project" value="GO_Central"/>
</dbReference>
<dbReference type="CDD" id="cd10285">
    <property type="entry name" value="somatotropin_like"/>
    <property type="match status" value="1"/>
</dbReference>
<dbReference type="FunFam" id="1.20.1250.10:FF:000053">
    <property type="entry name" value="Growth hormone 2"/>
    <property type="match status" value="1"/>
</dbReference>
<dbReference type="Gene3D" id="1.20.1250.10">
    <property type="match status" value="1"/>
</dbReference>
<dbReference type="InterPro" id="IPR009079">
    <property type="entry name" value="4_helix_cytokine-like_core"/>
</dbReference>
<dbReference type="InterPro" id="IPR034975">
    <property type="entry name" value="Somatotropin"/>
</dbReference>
<dbReference type="InterPro" id="IPR001400">
    <property type="entry name" value="Somatotropin/Prolactin"/>
</dbReference>
<dbReference type="InterPro" id="IPR018116">
    <property type="entry name" value="Somatotropin_CS"/>
</dbReference>
<dbReference type="PANTHER" id="PTHR11417:SF2">
    <property type="entry name" value="SOMATOTROPIN"/>
    <property type="match status" value="1"/>
</dbReference>
<dbReference type="PANTHER" id="PTHR11417">
    <property type="entry name" value="SOMATOTROPIN,PROLACTIN"/>
    <property type="match status" value="1"/>
</dbReference>
<dbReference type="Pfam" id="PF00103">
    <property type="entry name" value="Hormone_1"/>
    <property type="match status" value="1"/>
</dbReference>
<dbReference type="PRINTS" id="PR00836">
    <property type="entry name" value="SOMATOTROPIN"/>
</dbReference>
<dbReference type="SUPFAM" id="SSF47266">
    <property type="entry name" value="4-helical cytokines"/>
    <property type="match status" value="1"/>
</dbReference>
<dbReference type="PROSITE" id="PS00266">
    <property type="entry name" value="SOMATOTROPIN_1"/>
    <property type="match status" value="1"/>
</dbReference>
<dbReference type="PROSITE" id="PS00338">
    <property type="entry name" value="SOMATOTROPIN_2"/>
    <property type="match status" value="1"/>
</dbReference>
<protein>
    <recommendedName>
        <fullName>Somatotropin-B</fullName>
    </recommendedName>
    <alternativeName>
        <fullName>Growth hormone B</fullName>
        <shortName>GH-B</shortName>
    </alternativeName>
</protein>
<name>SOMA2_XENLA</name>
<reference key="1">
    <citation type="journal article" date="2000" name="Proc. Natl. Acad. Sci. U.S.A.">
        <title>Overexpression of Xenopus laevis growth hormone stimulates growth of tadpoles and frogs.</title>
        <authorList>
            <person name="Huang H."/>
            <person name="Brown D.D."/>
        </authorList>
    </citation>
    <scope>NUCLEOTIDE SEQUENCE [MRNA]</scope>
</reference>
<reference key="2">
    <citation type="journal article" date="1989" name="Nucleic Acids Res.">
        <title>Expression of two growth hormone genes in the Xenopus pituitary gland.</title>
        <authorList>
            <person name="Martens G.J.M."/>
            <person name="Groenen P.J.T.A."/>
            <person name="Braks A.A.M."/>
            <person name="Bussemakers M.J.G."/>
        </authorList>
    </citation>
    <scope>NUCLEOTIDE SEQUENCE [MRNA] OF 124-208</scope>
    <source>
        <tissue>Pituitary</tissue>
    </source>
</reference>
<comment type="function">
    <text>Growth hormone plays an important role in growth control.</text>
</comment>
<comment type="subcellular location">
    <subcellularLocation>
        <location>Secreted</location>
    </subcellularLocation>
</comment>
<comment type="similarity">
    <text evidence="2">Belongs to the somatotropin/prolactin family.</text>
</comment>
<sequence>MVPGSCSSFGLLVILSFQNVPDVGGFPNVPLFSLFTNAVNRAQHLHMLAADIYKDYERTYITDDVRRSSKNSQVVSCYSENIPAPTDKDNTHLKSDMDLLRFSLTLIQSWLNPVQALHRLFRNSDVYERLKYLEEGIQSLIRELEDGNLRSYSFMRTPYERLDINMRTDDGLLKVYGLLSCFKKDMHKVETYMKVIKCRHFAESKCVI</sequence>
<keyword id="KW-1015">Disulfide bond</keyword>
<keyword id="KW-0372">Hormone</keyword>
<keyword id="KW-0479">Metal-binding</keyword>
<keyword id="KW-1185">Reference proteome</keyword>
<keyword id="KW-0964">Secreted</keyword>
<keyword id="KW-0732">Signal</keyword>
<keyword id="KW-0862">Zinc</keyword>
<accession>P12856</accession>
<accession>Q9PTI2</accession>
<gene>
    <name type="primary">gh-b</name>
    <name type="synonym">ghb</name>
</gene>
<evidence type="ECO:0000250" key="1"/>
<evidence type="ECO:0000305" key="2"/>